<accession>A4SFG2</accession>
<evidence type="ECO:0000255" key="1">
    <source>
        <dbReference type="HAMAP-Rule" id="MF_01404"/>
    </source>
</evidence>
<reference key="1">
    <citation type="submission" date="2007-03" db="EMBL/GenBank/DDBJ databases">
        <title>Complete sequence of Prosthecochloris vibrioformis DSM 265.</title>
        <authorList>
            <consortium name="US DOE Joint Genome Institute"/>
            <person name="Copeland A."/>
            <person name="Lucas S."/>
            <person name="Lapidus A."/>
            <person name="Barry K."/>
            <person name="Detter J.C."/>
            <person name="Glavina del Rio T."/>
            <person name="Hammon N."/>
            <person name="Israni S."/>
            <person name="Pitluck S."/>
            <person name="Schmutz J."/>
            <person name="Larimer F."/>
            <person name="Land M."/>
            <person name="Hauser L."/>
            <person name="Mikhailova N."/>
            <person name="Li T."/>
            <person name="Overmann J."/>
            <person name="Schuster S.C."/>
            <person name="Bryant D.A."/>
            <person name="Richardson P."/>
        </authorList>
    </citation>
    <scope>NUCLEOTIDE SEQUENCE [LARGE SCALE GENOMIC DNA]</scope>
    <source>
        <strain>DSM 265 / 1930</strain>
    </source>
</reference>
<keyword id="KW-0210">Decarboxylase</keyword>
<keyword id="KW-0456">Lyase</keyword>
<keyword id="KW-0670">Pyruvate</keyword>
<dbReference type="EC" id="4.1.1.19" evidence="1"/>
<dbReference type="EMBL" id="CP000607">
    <property type="protein sequence ID" value="ABP37221.1"/>
    <property type="molecule type" value="Genomic_DNA"/>
</dbReference>
<dbReference type="SMR" id="A4SFG2"/>
<dbReference type="STRING" id="290318.Cvib_1209"/>
<dbReference type="KEGG" id="pvi:Cvib_1209"/>
<dbReference type="eggNOG" id="COG1945">
    <property type="taxonomic scope" value="Bacteria"/>
</dbReference>
<dbReference type="HOGENOM" id="CLU_114389_0_0_10"/>
<dbReference type="OrthoDB" id="9783061at2"/>
<dbReference type="GO" id="GO:0008792">
    <property type="term" value="F:arginine decarboxylase activity"/>
    <property type="evidence" value="ECO:0007669"/>
    <property type="project" value="UniProtKB-UniRule"/>
</dbReference>
<dbReference type="GO" id="GO:0006527">
    <property type="term" value="P:arginine catabolic process"/>
    <property type="evidence" value="ECO:0007669"/>
    <property type="project" value="InterPro"/>
</dbReference>
<dbReference type="Gene3D" id="3.50.20.10">
    <property type="entry name" value="Pyruvoyl-Dependent Histidine Decarboxylase, subunit B"/>
    <property type="match status" value="1"/>
</dbReference>
<dbReference type="HAMAP" id="MF_01404">
    <property type="entry name" value="PvlArgDC"/>
    <property type="match status" value="1"/>
</dbReference>
<dbReference type="InterPro" id="IPR016104">
    <property type="entry name" value="Pyr-dep_his/arg-deCO2ase"/>
</dbReference>
<dbReference type="InterPro" id="IPR016105">
    <property type="entry name" value="Pyr-dep_his/arg-deCO2ase_sand"/>
</dbReference>
<dbReference type="InterPro" id="IPR002724">
    <property type="entry name" value="Pyruvoyl-dep_arg_deCO2ase"/>
</dbReference>
<dbReference type="NCBIfam" id="TIGR00286">
    <property type="entry name" value="pyruvoyl-dependent arginine decarboxylase"/>
    <property type="match status" value="1"/>
</dbReference>
<dbReference type="PANTHER" id="PTHR40438">
    <property type="entry name" value="PYRUVOYL-DEPENDENT ARGININE DECARBOXYLASE"/>
    <property type="match status" value="1"/>
</dbReference>
<dbReference type="PANTHER" id="PTHR40438:SF1">
    <property type="entry name" value="PYRUVOYL-DEPENDENT ARGININE DECARBOXYLASE"/>
    <property type="match status" value="1"/>
</dbReference>
<dbReference type="Pfam" id="PF01862">
    <property type="entry name" value="PvlArgDC"/>
    <property type="match status" value="1"/>
</dbReference>
<dbReference type="PIRSF" id="PIRSF005216">
    <property type="entry name" value="Pyruvoyl-dep_arg_deCO2ase"/>
    <property type="match status" value="1"/>
</dbReference>
<dbReference type="SFLD" id="SFLDG01170">
    <property type="entry name" value="Pyruvoyl-dependent_arginine_de"/>
    <property type="match status" value="1"/>
</dbReference>
<dbReference type="SFLD" id="SFLDS00055">
    <property type="entry name" value="Pyruvoyl-Dependent_Histidine/A"/>
    <property type="match status" value="1"/>
</dbReference>
<dbReference type="SUPFAM" id="SSF56271">
    <property type="entry name" value="Pyruvoyl-dependent histidine and arginine decarboxylases"/>
    <property type="match status" value="1"/>
</dbReference>
<comment type="catalytic activity">
    <reaction evidence="1">
        <text>L-arginine + H(+) = agmatine + CO2</text>
        <dbReference type="Rhea" id="RHEA:17641"/>
        <dbReference type="ChEBI" id="CHEBI:15378"/>
        <dbReference type="ChEBI" id="CHEBI:16526"/>
        <dbReference type="ChEBI" id="CHEBI:32682"/>
        <dbReference type="ChEBI" id="CHEBI:58145"/>
        <dbReference type="EC" id="4.1.1.19"/>
    </reaction>
</comment>
<comment type="cofactor">
    <cofactor evidence="1">
        <name>pyruvate</name>
        <dbReference type="ChEBI" id="CHEBI:15361"/>
    </cofactor>
    <text evidence="1">Binds 1 pyruvoyl group covalently per subunit.</text>
</comment>
<comment type="similarity">
    <text evidence="1">Belongs to the PdaD family.</text>
</comment>
<feature type="chain" id="PRO_1000087373" description="Pyruvoyl-dependent arginine decarboxylase subunit beta" evidence="1">
    <location>
        <begin position="1"/>
        <end position="42"/>
    </location>
</feature>
<feature type="chain" id="PRO_1000087374" description="Pyruvoyl-dependent arginine decarboxylase subunit alpha" evidence="1">
    <location>
        <begin position="43"/>
        <end position="181"/>
    </location>
</feature>
<feature type="site" description="Cleavage (non-hydrolytic)" evidence="1">
    <location>
        <begin position="42"/>
        <end position="43"/>
    </location>
</feature>
<feature type="modified residue" description="Pyruvic acid (Ser)" evidence="1">
    <location>
        <position position="43"/>
    </location>
</feature>
<proteinExistence type="inferred from homology"/>
<gene>
    <name evidence="1" type="primary">pdaD</name>
    <name type="ordered locus">Cvib_1209</name>
</gene>
<protein>
    <recommendedName>
        <fullName evidence="1">Probable pyruvoyl-dependent arginine decarboxylase</fullName>
        <shortName evidence="1">PvlArgDC</shortName>
        <ecNumber evidence="1">4.1.1.19</ecNumber>
    </recommendedName>
    <component>
        <recommendedName>
            <fullName evidence="1">Pyruvoyl-dependent arginine decarboxylase subunit beta</fullName>
        </recommendedName>
    </component>
    <component>
        <recommendedName>
            <fullName evidence="1">Pyruvoyl-dependent arginine decarboxylase subunit alpha</fullName>
        </recommendedName>
    </component>
</protein>
<name>PDAD_CHLPM</name>
<sequence length="181" mass="20070">MSFVPTKVFFTKGVGRHKEYLSSFELALRDAKIEKCNLVTVSSIFPPKCERISVEEGIKLLTPGQITFAVMARNSTNEYNRLMAASIGVAIPADDTQYGYLSEHHPFGEDEEQSGEYAEDLAATMLATTLGIEFDPNKDWDEREGIYKMSGKIINSYNITQSAEGENGLWTTVISCAVLLP</sequence>
<organism>
    <name type="scientific">Chlorobium phaeovibrioides (strain DSM 265 / 1930)</name>
    <name type="common">Prosthecochloris vibrioformis (strain DSM 265)</name>
    <dbReference type="NCBI Taxonomy" id="290318"/>
    <lineage>
        <taxon>Bacteria</taxon>
        <taxon>Pseudomonadati</taxon>
        <taxon>Chlorobiota</taxon>
        <taxon>Chlorobiia</taxon>
        <taxon>Chlorobiales</taxon>
        <taxon>Chlorobiaceae</taxon>
        <taxon>Chlorobium/Pelodictyon group</taxon>
        <taxon>Chlorobium</taxon>
    </lineage>
</organism>